<comment type="function">
    <text evidence="1">F(1)F(0) ATP synthase produces ATP from ADP in the presence of a proton or sodium gradient. F-type ATPases consist of two structural domains, F(1) containing the extramembraneous catalytic core and F(0) containing the membrane proton channel, linked together by a central stalk and a peripheral stalk. During catalysis, ATP synthesis in the catalytic domain of F(1) is coupled via a rotary mechanism of the central stalk subunits to proton translocation.</text>
</comment>
<comment type="function">
    <text evidence="1">This protein is part of the stalk that links CF(0) to CF(1). It either transmits conformational changes from CF(0) to CF(1) or is implicated in proton conduction.</text>
</comment>
<comment type="subunit">
    <text evidence="1">F-type ATPases have 2 components, F(1) - the catalytic core - and F(0) - the membrane proton channel. F(1) has five subunits: alpha(3), beta(3), gamma(1), delta(1), epsilon(1). F(0) has three main subunits: a(1), b(2) and c(10-14). The alpha and beta chains form an alternating ring which encloses part of the gamma chain. F(1) is attached to F(0) by a central stalk formed by the gamma and epsilon chains, while a peripheral stalk is formed by the delta and b chains.</text>
</comment>
<comment type="subcellular location">
    <subcellularLocation>
        <location evidence="1">Cell inner membrane</location>
        <topology evidence="1">Peripheral membrane protein</topology>
    </subcellularLocation>
</comment>
<comment type="similarity">
    <text evidence="1">Belongs to the ATPase delta chain family.</text>
</comment>
<feature type="chain" id="PRO_0000370979" description="ATP synthase subunit delta">
    <location>
        <begin position="1"/>
        <end position="177"/>
    </location>
</feature>
<organism>
    <name type="scientific">Escherichia coli O6:K15:H31 (strain 536 / UPEC)</name>
    <dbReference type="NCBI Taxonomy" id="362663"/>
    <lineage>
        <taxon>Bacteria</taxon>
        <taxon>Pseudomonadati</taxon>
        <taxon>Pseudomonadota</taxon>
        <taxon>Gammaproteobacteria</taxon>
        <taxon>Enterobacterales</taxon>
        <taxon>Enterobacteriaceae</taxon>
        <taxon>Escherichia</taxon>
    </lineage>
</organism>
<dbReference type="EMBL" id="CP000247">
    <property type="protein sequence ID" value="ABG71905.1"/>
    <property type="molecule type" value="Genomic_DNA"/>
</dbReference>
<dbReference type="RefSeq" id="WP_001288587.1">
    <property type="nucleotide sequence ID" value="NC_008253.1"/>
</dbReference>
<dbReference type="SMR" id="Q0TAX4"/>
<dbReference type="GeneID" id="93778232"/>
<dbReference type="KEGG" id="ecp:ECP_3934"/>
<dbReference type="HOGENOM" id="CLU_085114_3_0_6"/>
<dbReference type="Proteomes" id="UP000009182">
    <property type="component" value="Chromosome"/>
</dbReference>
<dbReference type="GO" id="GO:0005886">
    <property type="term" value="C:plasma membrane"/>
    <property type="evidence" value="ECO:0007669"/>
    <property type="project" value="UniProtKB-SubCell"/>
</dbReference>
<dbReference type="GO" id="GO:0045259">
    <property type="term" value="C:proton-transporting ATP synthase complex"/>
    <property type="evidence" value="ECO:0007669"/>
    <property type="project" value="UniProtKB-KW"/>
</dbReference>
<dbReference type="GO" id="GO:0046933">
    <property type="term" value="F:proton-transporting ATP synthase activity, rotational mechanism"/>
    <property type="evidence" value="ECO:0007669"/>
    <property type="project" value="UniProtKB-UniRule"/>
</dbReference>
<dbReference type="FunFam" id="1.10.520.20:FF:000001">
    <property type="entry name" value="ATP synthase subunit delta"/>
    <property type="match status" value="1"/>
</dbReference>
<dbReference type="Gene3D" id="1.10.520.20">
    <property type="entry name" value="N-terminal domain of the delta subunit of the F1F0-ATP synthase"/>
    <property type="match status" value="1"/>
</dbReference>
<dbReference type="HAMAP" id="MF_01416">
    <property type="entry name" value="ATP_synth_delta_bact"/>
    <property type="match status" value="1"/>
</dbReference>
<dbReference type="InterPro" id="IPR026015">
    <property type="entry name" value="ATP_synth_OSCP/delta_N_sf"/>
</dbReference>
<dbReference type="InterPro" id="IPR020781">
    <property type="entry name" value="ATPase_OSCP/d_CS"/>
</dbReference>
<dbReference type="InterPro" id="IPR000711">
    <property type="entry name" value="ATPase_OSCP/dsu"/>
</dbReference>
<dbReference type="NCBIfam" id="TIGR01145">
    <property type="entry name" value="ATP_synt_delta"/>
    <property type="match status" value="1"/>
</dbReference>
<dbReference type="NCBIfam" id="NF004402">
    <property type="entry name" value="PRK05758.2-2"/>
    <property type="match status" value="1"/>
</dbReference>
<dbReference type="NCBIfam" id="NF004404">
    <property type="entry name" value="PRK05758.2-5"/>
    <property type="match status" value="1"/>
</dbReference>
<dbReference type="PANTHER" id="PTHR11910">
    <property type="entry name" value="ATP SYNTHASE DELTA CHAIN"/>
    <property type="match status" value="1"/>
</dbReference>
<dbReference type="Pfam" id="PF00213">
    <property type="entry name" value="OSCP"/>
    <property type="match status" value="1"/>
</dbReference>
<dbReference type="PRINTS" id="PR00125">
    <property type="entry name" value="ATPASEDELTA"/>
</dbReference>
<dbReference type="SUPFAM" id="SSF47928">
    <property type="entry name" value="N-terminal domain of the delta subunit of the F1F0-ATP synthase"/>
    <property type="match status" value="1"/>
</dbReference>
<dbReference type="PROSITE" id="PS00389">
    <property type="entry name" value="ATPASE_DELTA"/>
    <property type="match status" value="1"/>
</dbReference>
<proteinExistence type="inferred from homology"/>
<reference key="1">
    <citation type="journal article" date="2006" name="Mol. Microbiol.">
        <title>Role of pathogenicity island-associated integrases in the genome plasticity of uropathogenic Escherichia coli strain 536.</title>
        <authorList>
            <person name="Hochhut B."/>
            <person name="Wilde C."/>
            <person name="Balling G."/>
            <person name="Middendorf B."/>
            <person name="Dobrindt U."/>
            <person name="Brzuszkiewicz E."/>
            <person name="Gottschalk G."/>
            <person name="Carniel E."/>
            <person name="Hacker J."/>
        </authorList>
    </citation>
    <scope>NUCLEOTIDE SEQUENCE [LARGE SCALE GENOMIC DNA]</scope>
    <source>
        <strain>536 / UPEC</strain>
    </source>
</reference>
<sequence length="177" mass="19332">MSEFITVARPYAKAAFDFAVEHQSVERWQDMLAFAAEVTKNEQMAELLSGALAPETLAESFIAVCGEQLDENGQNLIRVMAENGRLNALPDVLEQFIHLRAVSEATAEVDVISAAALSEQQLAKISAAMEKRLSRKVKLNCKIDKSVMAGVIIRAGDMVIDGSVRGRLERLADVLQS</sequence>
<protein>
    <recommendedName>
        <fullName evidence="1">ATP synthase subunit delta</fullName>
    </recommendedName>
    <alternativeName>
        <fullName evidence="1">ATP synthase F(1) sector subunit delta</fullName>
    </alternativeName>
    <alternativeName>
        <fullName evidence="1">F-type ATPase subunit delta</fullName>
        <shortName evidence="1">F-ATPase subunit delta</shortName>
    </alternativeName>
</protein>
<keyword id="KW-0066">ATP synthesis</keyword>
<keyword id="KW-0997">Cell inner membrane</keyword>
<keyword id="KW-1003">Cell membrane</keyword>
<keyword id="KW-0139">CF(1)</keyword>
<keyword id="KW-0375">Hydrogen ion transport</keyword>
<keyword id="KW-0406">Ion transport</keyword>
<keyword id="KW-0472">Membrane</keyword>
<keyword id="KW-0813">Transport</keyword>
<accession>Q0TAX4</accession>
<evidence type="ECO:0000255" key="1">
    <source>
        <dbReference type="HAMAP-Rule" id="MF_01416"/>
    </source>
</evidence>
<gene>
    <name evidence="1" type="primary">atpH</name>
    <name type="ordered locus">ECP_3934</name>
</gene>
<name>ATPD_ECOL5</name>